<gene>
    <name type="primary">ARG2</name>
    <name type="ORF">CD36_04750</name>
</gene>
<organism>
    <name type="scientific">Candida dubliniensis (strain CD36 / ATCC MYA-646 / CBS 7987 / NCPF 3949 / NRRL Y-17841)</name>
    <name type="common">Yeast</name>
    <dbReference type="NCBI Taxonomy" id="573826"/>
    <lineage>
        <taxon>Eukaryota</taxon>
        <taxon>Fungi</taxon>
        <taxon>Dikarya</taxon>
        <taxon>Ascomycota</taxon>
        <taxon>Saccharomycotina</taxon>
        <taxon>Pichiomycetes</taxon>
        <taxon>Debaryomycetaceae</taxon>
        <taxon>Candida/Lodderomyces clade</taxon>
        <taxon>Candida</taxon>
    </lineage>
</organism>
<keyword id="KW-0012">Acyltransferase</keyword>
<keyword id="KW-0028">Amino-acid biosynthesis</keyword>
<keyword id="KW-0496">Mitochondrion</keyword>
<keyword id="KW-0808">Transferase</keyword>
<keyword id="KW-0809">Transit peptide</keyword>
<dbReference type="EC" id="2.3.1.1"/>
<dbReference type="EMBL" id="FM992688">
    <property type="protein sequence ID" value="CAX44734.1"/>
    <property type="molecule type" value="Genomic_DNA"/>
</dbReference>
<dbReference type="RefSeq" id="XP_002417144.1">
    <property type="nucleotide sequence ID" value="XM_002417099.1"/>
</dbReference>
<dbReference type="SMR" id="B9W7S3"/>
<dbReference type="GeneID" id="8044679"/>
<dbReference type="KEGG" id="cdu:CD36_04750"/>
<dbReference type="CGD" id="CAL0000159878">
    <property type="gene designation" value="Cd36_04750"/>
</dbReference>
<dbReference type="VEuPathDB" id="FungiDB:CD36_04750"/>
<dbReference type="eggNOG" id="KOG2436">
    <property type="taxonomic scope" value="Eukaryota"/>
</dbReference>
<dbReference type="HOGENOM" id="CLU_013088_0_0_1"/>
<dbReference type="OrthoDB" id="5585968at2759"/>
<dbReference type="UniPathway" id="UPA00068">
    <property type="reaction ID" value="UER00106"/>
</dbReference>
<dbReference type="Proteomes" id="UP000002605">
    <property type="component" value="Chromosome 1"/>
</dbReference>
<dbReference type="GO" id="GO:0005759">
    <property type="term" value="C:mitochondrial matrix"/>
    <property type="evidence" value="ECO:0007669"/>
    <property type="project" value="TreeGrafter"/>
</dbReference>
<dbReference type="GO" id="GO:0004042">
    <property type="term" value="F:L-glutamate N-acetyltransferase activity"/>
    <property type="evidence" value="ECO:0007669"/>
    <property type="project" value="InterPro"/>
</dbReference>
<dbReference type="GO" id="GO:0006526">
    <property type="term" value="P:L-arginine biosynthetic process"/>
    <property type="evidence" value="ECO:0007669"/>
    <property type="project" value="UniProtKB-UniPathway"/>
</dbReference>
<dbReference type="GO" id="GO:0006592">
    <property type="term" value="P:ornithine biosynthetic process"/>
    <property type="evidence" value="ECO:0007669"/>
    <property type="project" value="TreeGrafter"/>
</dbReference>
<dbReference type="CDD" id="cd04266">
    <property type="entry name" value="DUF619-NAGS-FABP"/>
    <property type="match status" value="1"/>
</dbReference>
<dbReference type="Gene3D" id="3.40.630.30">
    <property type="match status" value="1"/>
</dbReference>
<dbReference type="InterPro" id="IPR011190">
    <property type="entry name" value="GlcNAc_Synth_fun"/>
</dbReference>
<dbReference type="InterPro" id="IPR006855">
    <property type="entry name" value="Vertebrate-like_GNAT_dom"/>
</dbReference>
<dbReference type="PANTHER" id="PTHR23342:SF4">
    <property type="entry name" value="AMINO-ACID ACETYLTRANSFERASE, MITOCHONDRIAL"/>
    <property type="match status" value="1"/>
</dbReference>
<dbReference type="PANTHER" id="PTHR23342">
    <property type="entry name" value="N-ACETYLGLUTAMATE SYNTHASE"/>
    <property type="match status" value="1"/>
</dbReference>
<dbReference type="Pfam" id="PF04768">
    <property type="entry name" value="NAT"/>
    <property type="match status" value="1"/>
</dbReference>
<dbReference type="PIRSF" id="PIRSF007892">
    <property type="entry name" value="NAGS_fungal"/>
    <property type="match status" value="1"/>
</dbReference>
<dbReference type="PROSITE" id="PS51731">
    <property type="entry name" value="GNAT_NAGS"/>
    <property type="match status" value="1"/>
</dbReference>
<name>NAGS_CANDC</name>
<comment type="function">
    <text evidence="1">N-acetylglutamate synthase involved in arginine biosynthesis.</text>
</comment>
<comment type="catalytic activity">
    <reaction>
        <text>L-glutamate + acetyl-CoA = N-acetyl-L-glutamate + CoA + H(+)</text>
        <dbReference type="Rhea" id="RHEA:24292"/>
        <dbReference type="ChEBI" id="CHEBI:15378"/>
        <dbReference type="ChEBI" id="CHEBI:29985"/>
        <dbReference type="ChEBI" id="CHEBI:44337"/>
        <dbReference type="ChEBI" id="CHEBI:57287"/>
        <dbReference type="ChEBI" id="CHEBI:57288"/>
        <dbReference type="EC" id="2.3.1.1"/>
    </reaction>
</comment>
<comment type="pathway">
    <text>Amino-acid biosynthesis; L-arginine biosynthesis; N(2)-acetyl-L-ornithine from L-glutamate: step 1/4.</text>
</comment>
<comment type="subcellular location">
    <subcellularLocation>
        <location evidence="1">Mitochondrion</location>
    </subcellularLocation>
</comment>
<comment type="similarity">
    <text evidence="4">Belongs to the acetyltransferase family.</text>
</comment>
<sequence>MSKLKTLNRQFISNLETHKVTTDAKRNLILSILKSTTTKREAKNYLTKYQNQFDFNDDLDFNKNIKIKNEQLSLTNRDSQRELFINRFLNQSNPFINIYDREDVKLQKVPLRLAIFKIKFTKITIKQWKGIAETFKRLITLGISPIIMLDYDHLPSNSFKNNELYMINQGNKMLNYLGRPEEESDLKVTLLRSLFTSHKGVPTLDSLESILIPLYQGIIPIIQPIVYNADASKQEFLESDKLLLGLSSALIEKRTTDLLSIEKIVMIDPMGGIPSIERRQTSHVFINLSQEYSDILSELFIGHIEPKYRDTHVNNLNTMNNVLSFINEKSGNDETTGIITTPEIMSINIDQLNPIIYNVLTDRAIISSSLPSTTNRTPHLSTTIIKKGVDVQIFDIDNYDKDLTMQNLFDDKLVNKEKLINLLNDSFGKSLDVDPYLDRINDNIATVVIVGDYDGAAIITWEYSKGEKIAYLDKFAIAKKNQGLPGLADVIFKIILQSHPFELIWRSRKNNPVNKWYFERCCGCMSAPDSQWKIFYTGEVFDKKIDRFKRNPRHKNGVVNIDRKLQQYSEICEGITPSFK</sequence>
<feature type="transit peptide" description="Mitochondrion" evidence="2">
    <location>
        <begin position="1"/>
        <end status="unknown"/>
    </location>
</feature>
<feature type="chain" id="PRO_0000372557" description="Amino-acid acetyltransferase, mitochondrial">
    <location>
        <begin status="unknown"/>
        <end position="580"/>
    </location>
</feature>
<feature type="domain" description="N-acetyltransferase" evidence="3">
    <location>
        <begin position="403"/>
        <end position="560"/>
    </location>
</feature>
<reference key="1">
    <citation type="journal article" date="2009" name="Genome Res.">
        <title>Comparative genomics of the fungal pathogens Candida dubliniensis and Candida albicans.</title>
        <authorList>
            <person name="Jackson A.P."/>
            <person name="Gamble J.A."/>
            <person name="Yeomans T."/>
            <person name="Moran G.P."/>
            <person name="Saunders D."/>
            <person name="Harris D."/>
            <person name="Aslett M."/>
            <person name="Barrell J.F."/>
            <person name="Butler G."/>
            <person name="Citiulo F."/>
            <person name="Coleman D.C."/>
            <person name="de Groot P.W.J."/>
            <person name="Goodwin T.J."/>
            <person name="Quail M.A."/>
            <person name="McQuillan J."/>
            <person name="Munro C.A."/>
            <person name="Pain A."/>
            <person name="Poulter R.T."/>
            <person name="Rajandream M.A."/>
            <person name="Renauld H."/>
            <person name="Spiering M.J."/>
            <person name="Tivey A."/>
            <person name="Gow N.A.R."/>
            <person name="Barrell B."/>
            <person name="Sullivan D.J."/>
            <person name="Berriman M."/>
        </authorList>
    </citation>
    <scope>NUCLEOTIDE SEQUENCE [LARGE SCALE GENOMIC DNA]</scope>
    <source>
        <strain>CD36 / ATCC MYA-646 / CBS 7987 / NCPF 3949 / NRRL Y-17841</strain>
    </source>
</reference>
<protein>
    <recommendedName>
        <fullName>Amino-acid acetyltransferase, mitochondrial</fullName>
        <ecNumber>2.3.1.1</ecNumber>
    </recommendedName>
    <alternativeName>
        <fullName>Arginine-requiring protein 2</fullName>
    </alternativeName>
    <alternativeName>
        <fullName>Glutamate N-acetyltransferase</fullName>
    </alternativeName>
    <alternativeName>
        <fullName>N-acetylglutamate synthase</fullName>
        <shortName>AGS</shortName>
        <shortName>NAGS</shortName>
    </alternativeName>
</protein>
<accession>B9W7S3</accession>
<evidence type="ECO:0000250" key="1"/>
<evidence type="ECO:0000255" key="2"/>
<evidence type="ECO:0000255" key="3">
    <source>
        <dbReference type="PROSITE-ProRule" id="PRU00532"/>
    </source>
</evidence>
<evidence type="ECO:0000305" key="4"/>
<proteinExistence type="inferred from homology"/>